<proteinExistence type="inferred from homology"/>
<protein>
    <recommendedName>
        <fullName evidence="1">2,3,4,5-tetrahydropyridine-2,6-dicarboxylate N-succinyltransferase</fullName>
        <ecNumber evidence="1">2.3.1.117</ecNumber>
    </recommendedName>
    <alternativeName>
        <fullName evidence="1">Tetrahydrodipicolinate N-succinyltransferase</fullName>
        <shortName evidence="1">THP succinyltransferase</shortName>
        <shortName evidence="1">Tetrahydropicolinate succinylase</shortName>
    </alternativeName>
</protein>
<accession>B7NIC7</accession>
<name>DAPD_ECO7I</name>
<sequence>MQQLQNIIETAFERRAEITPANADTVTREAVNQVIALLDSGALRVAEKIDGQWVTHQWLKKAVLLSFRINDNQVIEGAESRYFDKVPMKFANYDEARFQKEGFRVVPPAAVRQGAFIARNTVLMPSYVNIGAYVDEGTMVDTWATVGSCAQIGKNVHLSGGVGIGGVLEPLQANPTIIEDNCFIGARSEVVEGVIVEEGSVISMGVYIGQSTRIYDRETGEIHYGRVPAGSVVVSGNLPSKDGKYSLYCAVIVKKVDAKTRGKVGINELLRTID</sequence>
<feature type="chain" id="PRO_1000134043" description="2,3,4,5-tetrahydropyridine-2,6-dicarboxylate N-succinyltransferase">
    <location>
        <begin position="1"/>
        <end position="274"/>
    </location>
</feature>
<organism>
    <name type="scientific">Escherichia coli O7:K1 (strain IAI39 / ExPEC)</name>
    <dbReference type="NCBI Taxonomy" id="585057"/>
    <lineage>
        <taxon>Bacteria</taxon>
        <taxon>Pseudomonadati</taxon>
        <taxon>Pseudomonadota</taxon>
        <taxon>Gammaproteobacteria</taxon>
        <taxon>Enterobacterales</taxon>
        <taxon>Enterobacteriaceae</taxon>
        <taxon>Escherichia</taxon>
    </lineage>
</organism>
<reference key="1">
    <citation type="journal article" date="2009" name="PLoS Genet.">
        <title>Organised genome dynamics in the Escherichia coli species results in highly diverse adaptive paths.</title>
        <authorList>
            <person name="Touchon M."/>
            <person name="Hoede C."/>
            <person name="Tenaillon O."/>
            <person name="Barbe V."/>
            <person name="Baeriswyl S."/>
            <person name="Bidet P."/>
            <person name="Bingen E."/>
            <person name="Bonacorsi S."/>
            <person name="Bouchier C."/>
            <person name="Bouvet O."/>
            <person name="Calteau A."/>
            <person name="Chiapello H."/>
            <person name="Clermont O."/>
            <person name="Cruveiller S."/>
            <person name="Danchin A."/>
            <person name="Diard M."/>
            <person name="Dossat C."/>
            <person name="Karoui M.E."/>
            <person name="Frapy E."/>
            <person name="Garry L."/>
            <person name="Ghigo J.M."/>
            <person name="Gilles A.M."/>
            <person name="Johnson J."/>
            <person name="Le Bouguenec C."/>
            <person name="Lescat M."/>
            <person name="Mangenot S."/>
            <person name="Martinez-Jehanne V."/>
            <person name="Matic I."/>
            <person name="Nassif X."/>
            <person name="Oztas S."/>
            <person name="Petit M.A."/>
            <person name="Pichon C."/>
            <person name="Rouy Z."/>
            <person name="Ruf C.S."/>
            <person name="Schneider D."/>
            <person name="Tourret J."/>
            <person name="Vacherie B."/>
            <person name="Vallenet D."/>
            <person name="Medigue C."/>
            <person name="Rocha E.P.C."/>
            <person name="Denamur E."/>
        </authorList>
    </citation>
    <scope>NUCLEOTIDE SEQUENCE [LARGE SCALE GENOMIC DNA]</scope>
    <source>
        <strain>IAI39 / ExPEC</strain>
    </source>
</reference>
<comment type="catalytic activity">
    <reaction evidence="1">
        <text>(S)-2,3,4,5-tetrahydrodipicolinate + succinyl-CoA + H2O = (S)-2-succinylamino-6-oxoheptanedioate + CoA</text>
        <dbReference type="Rhea" id="RHEA:17325"/>
        <dbReference type="ChEBI" id="CHEBI:15377"/>
        <dbReference type="ChEBI" id="CHEBI:15685"/>
        <dbReference type="ChEBI" id="CHEBI:16845"/>
        <dbReference type="ChEBI" id="CHEBI:57287"/>
        <dbReference type="ChEBI" id="CHEBI:57292"/>
        <dbReference type="EC" id="2.3.1.117"/>
    </reaction>
</comment>
<comment type="pathway">
    <text evidence="1">Amino-acid biosynthesis; L-lysine biosynthesis via DAP pathway; LL-2,6-diaminopimelate from (S)-tetrahydrodipicolinate (succinylase route): step 1/3.</text>
</comment>
<comment type="subcellular location">
    <subcellularLocation>
        <location evidence="1">Cytoplasm</location>
    </subcellularLocation>
</comment>
<comment type="similarity">
    <text evidence="1">Belongs to the transferase hexapeptide repeat family.</text>
</comment>
<dbReference type="EC" id="2.3.1.117" evidence="1"/>
<dbReference type="EMBL" id="CU928164">
    <property type="protein sequence ID" value="CAR16308.1"/>
    <property type="molecule type" value="Genomic_DNA"/>
</dbReference>
<dbReference type="RefSeq" id="WP_001186656.1">
    <property type="nucleotide sequence ID" value="NC_011750.1"/>
</dbReference>
<dbReference type="RefSeq" id="YP_002406214.1">
    <property type="nucleotide sequence ID" value="NC_011750.1"/>
</dbReference>
<dbReference type="SMR" id="B7NIC7"/>
<dbReference type="STRING" id="585057.ECIAI39_0168"/>
<dbReference type="KEGG" id="ect:ECIAI39_0168"/>
<dbReference type="PATRIC" id="fig|585057.6.peg.181"/>
<dbReference type="HOGENOM" id="CLU_050859_0_1_6"/>
<dbReference type="UniPathway" id="UPA00034">
    <property type="reaction ID" value="UER00019"/>
</dbReference>
<dbReference type="Proteomes" id="UP000000749">
    <property type="component" value="Chromosome"/>
</dbReference>
<dbReference type="GO" id="GO:0005737">
    <property type="term" value="C:cytoplasm"/>
    <property type="evidence" value="ECO:0007669"/>
    <property type="project" value="UniProtKB-SubCell"/>
</dbReference>
<dbReference type="GO" id="GO:0008666">
    <property type="term" value="F:2,3,4,5-tetrahydropyridine-2,6-dicarboxylate N-succinyltransferase activity"/>
    <property type="evidence" value="ECO:0007669"/>
    <property type="project" value="UniProtKB-UniRule"/>
</dbReference>
<dbReference type="GO" id="GO:0016779">
    <property type="term" value="F:nucleotidyltransferase activity"/>
    <property type="evidence" value="ECO:0007669"/>
    <property type="project" value="TreeGrafter"/>
</dbReference>
<dbReference type="GO" id="GO:0019877">
    <property type="term" value="P:diaminopimelate biosynthetic process"/>
    <property type="evidence" value="ECO:0007669"/>
    <property type="project" value="UniProtKB-UniRule"/>
</dbReference>
<dbReference type="GO" id="GO:0009089">
    <property type="term" value="P:lysine biosynthetic process via diaminopimelate"/>
    <property type="evidence" value="ECO:0007669"/>
    <property type="project" value="UniProtKB-UniRule"/>
</dbReference>
<dbReference type="CDD" id="cd03350">
    <property type="entry name" value="LbH_THP_succinylT"/>
    <property type="match status" value="1"/>
</dbReference>
<dbReference type="FunFam" id="1.10.166.10:FF:000001">
    <property type="entry name" value="2,3,4,5-tetrahydropyridine-2,6-dicarboxylate N-succinyltransferase"/>
    <property type="match status" value="1"/>
</dbReference>
<dbReference type="FunFam" id="2.160.10.10:FF:000004">
    <property type="entry name" value="2,3,4,5-tetrahydropyridine-2,6-dicarboxylate N-succinyltransferase"/>
    <property type="match status" value="1"/>
</dbReference>
<dbReference type="Gene3D" id="2.160.10.10">
    <property type="entry name" value="Hexapeptide repeat proteins"/>
    <property type="match status" value="1"/>
</dbReference>
<dbReference type="Gene3D" id="1.10.166.10">
    <property type="entry name" value="Tetrahydrodipicolinate-N-succinyltransferase, N-terminal domain"/>
    <property type="match status" value="1"/>
</dbReference>
<dbReference type="HAMAP" id="MF_00811">
    <property type="entry name" value="DapD"/>
    <property type="match status" value="1"/>
</dbReference>
<dbReference type="InterPro" id="IPR005664">
    <property type="entry name" value="DapD_Trfase_Hexpep_rpt_fam"/>
</dbReference>
<dbReference type="InterPro" id="IPR001451">
    <property type="entry name" value="Hexapep"/>
</dbReference>
<dbReference type="InterPro" id="IPR018357">
    <property type="entry name" value="Hexapep_transf_CS"/>
</dbReference>
<dbReference type="InterPro" id="IPR023180">
    <property type="entry name" value="THP_succinylTrfase_dom1"/>
</dbReference>
<dbReference type="InterPro" id="IPR037133">
    <property type="entry name" value="THP_succinylTrfase_N_sf"/>
</dbReference>
<dbReference type="InterPro" id="IPR011004">
    <property type="entry name" value="Trimer_LpxA-like_sf"/>
</dbReference>
<dbReference type="NCBIfam" id="TIGR00965">
    <property type="entry name" value="dapD"/>
    <property type="match status" value="1"/>
</dbReference>
<dbReference type="NCBIfam" id="NF008808">
    <property type="entry name" value="PRK11830.1"/>
    <property type="match status" value="1"/>
</dbReference>
<dbReference type="PANTHER" id="PTHR19136:SF52">
    <property type="entry name" value="2,3,4,5-TETRAHYDROPYRIDINE-2,6-DICARBOXYLATE N-SUCCINYLTRANSFERASE"/>
    <property type="match status" value="1"/>
</dbReference>
<dbReference type="PANTHER" id="PTHR19136">
    <property type="entry name" value="MOLYBDENUM COFACTOR GUANYLYLTRANSFERASE"/>
    <property type="match status" value="1"/>
</dbReference>
<dbReference type="Pfam" id="PF14602">
    <property type="entry name" value="Hexapep_2"/>
    <property type="match status" value="1"/>
</dbReference>
<dbReference type="Pfam" id="PF14805">
    <property type="entry name" value="THDPS_N_2"/>
    <property type="match status" value="1"/>
</dbReference>
<dbReference type="SUPFAM" id="SSF51161">
    <property type="entry name" value="Trimeric LpxA-like enzymes"/>
    <property type="match status" value="1"/>
</dbReference>
<dbReference type="PROSITE" id="PS00101">
    <property type="entry name" value="HEXAPEP_TRANSFERASES"/>
    <property type="match status" value="1"/>
</dbReference>
<evidence type="ECO:0000255" key="1">
    <source>
        <dbReference type="HAMAP-Rule" id="MF_00811"/>
    </source>
</evidence>
<gene>
    <name evidence="1" type="primary">dapD</name>
    <name type="ordered locus">ECIAI39_0168</name>
</gene>
<keyword id="KW-0012">Acyltransferase</keyword>
<keyword id="KW-0028">Amino-acid biosynthesis</keyword>
<keyword id="KW-0963">Cytoplasm</keyword>
<keyword id="KW-0220">Diaminopimelate biosynthesis</keyword>
<keyword id="KW-0457">Lysine biosynthesis</keyword>
<keyword id="KW-0677">Repeat</keyword>
<keyword id="KW-0808">Transferase</keyword>